<accession>B7J1W2</accession>
<evidence type="ECO:0000255" key="1">
    <source>
        <dbReference type="HAMAP-Rule" id="MF_00368"/>
    </source>
</evidence>
<evidence type="ECO:0000305" key="2"/>
<feature type="chain" id="PRO_1000121395" description="Large ribosomal subunit protein bL12">
    <location>
        <begin position="1"/>
        <end position="124"/>
    </location>
</feature>
<keyword id="KW-0687">Ribonucleoprotein</keyword>
<keyword id="KW-0689">Ribosomal protein</keyword>
<sequence length="124" mass="12876">MALNKEDILTWLEGAKTMEVVDLVTAIEEKFGVTAAVAAGVGGAVSAGSADSEEQTEFDVILMSFGDSKINVIKEVRAITGLGLGEAKALVEAAPKAIKEGLSKSDAEELKKKLEAVGAKVEVK</sequence>
<name>RL7_BORBZ</name>
<protein>
    <recommendedName>
        <fullName evidence="1">Large ribosomal subunit protein bL12</fullName>
    </recommendedName>
    <alternativeName>
        <fullName evidence="2">50S ribosomal protein L7/L12</fullName>
    </alternativeName>
</protein>
<organism>
    <name type="scientific">Borreliella burgdorferi (strain ZS7)</name>
    <name type="common">Borrelia burgdorferi</name>
    <dbReference type="NCBI Taxonomy" id="445985"/>
    <lineage>
        <taxon>Bacteria</taxon>
        <taxon>Pseudomonadati</taxon>
        <taxon>Spirochaetota</taxon>
        <taxon>Spirochaetia</taxon>
        <taxon>Spirochaetales</taxon>
        <taxon>Borreliaceae</taxon>
        <taxon>Borreliella</taxon>
    </lineage>
</organism>
<comment type="function">
    <text evidence="1">Forms part of the ribosomal stalk which helps the ribosome interact with GTP-bound translation factors. Is thus essential for accurate translation.</text>
</comment>
<comment type="subunit">
    <text evidence="1">Homodimer. Part of the ribosomal stalk of the 50S ribosomal subunit. Forms a multimeric L10(L12)X complex, where L10 forms an elongated spine to which 2 to 4 L12 dimers bind in a sequential fashion. Binds GTP-bound translation factors.</text>
</comment>
<comment type="similarity">
    <text evidence="1">Belongs to the bacterial ribosomal protein bL12 family.</text>
</comment>
<proteinExistence type="inferred from homology"/>
<dbReference type="EMBL" id="CP001205">
    <property type="protein sequence ID" value="ACK75013.1"/>
    <property type="molecule type" value="Genomic_DNA"/>
</dbReference>
<dbReference type="RefSeq" id="WP_002556985.1">
    <property type="nucleotide sequence ID" value="NC_011728.1"/>
</dbReference>
<dbReference type="SMR" id="B7J1W2"/>
<dbReference type="GeneID" id="56567818"/>
<dbReference type="KEGG" id="bbz:BbuZS7_0392"/>
<dbReference type="HOGENOM" id="CLU_086499_3_2_12"/>
<dbReference type="Proteomes" id="UP000006901">
    <property type="component" value="Chromosome"/>
</dbReference>
<dbReference type="GO" id="GO:0022625">
    <property type="term" value="C:cytosolic large ribosomal subunit"/>
    <property type="evidence" value="ECO:0007669"/>
    <property type="project" value="TreeGrafter"/>
</dbReference>
<dbReference type="GO" id="GO:0003729">
    <property type="term" value="F:mRNA binding"/>
    <property type="evidence" value="ECO:0007669"/>
    <property type="project" value="TreeGrafter"/>
</dbReference>
<dbReference type="GO" id="GO:0003735">
    <property type="term" value="F:structural constituent of ribosome"/>
    <property type="evidence" value="ECO:0007669"/>
    <property type="project" value="InterPro"/>
</dbReference>
<dbReference type="GO" id="GO:0006412">
    <property type="term" value="P:translation"/>
    <property type="evidence" value="ECO:0007669"/>
    <property type="project" value="UniProtKB-UniRule"/>
</dbReference>
<dbReference type="CDD" id="cd00387">
    <property type="entry name" value="Ribosomal_L7_L12"/>
    <property type="match status" value="1"/>
</dbReference>
<dbReference type="FunFam" id="3.30.1390.10:FF:000001">
    <property type="entry name" value="50S ribosomal protein L7/L12"/>
    <property type="match status" value="1"/>
</dbReference>
<dbReference type="Gene3D" id="3.30.1390.10">
    <property type="match status" value="1"/>
</dbReference>
<dbReference type="Gene3D" id="1.20.5.710">
    <property type="entry name" value="Single helix bin"/>
    <property type="match status" value="1"/>
</dbReference>
<dbReference type="HAMAP" id="MF_00368">
    <property type="entry name" value="Ribosomal_bL12"/>
    <property type="match status" value="1"/>
</dbReference>
<dbReference type="InterPro" id="IPR000206">
    <property type="entry name" value="Ribosomal_bL12"/>
</dbReference>
<dbReference type="InterPro" id="IPR013823">
    <property type="entry name" value="Ribosomal_bL12_C"/>
</dbReference>
<dbReference type="InterPro" id="IPR014719">
    <property type="entry name" value="Ribosomal_bL12_C/ClpS-like"/>
</dbReference>
<dbReference type="InterPro" id="IPR008932">
    <property type="entry name" value="Ribosomal_bL12_oligo"/>
</dbReference>
<dbReference type="InterPro" id="IPR036235">
    <property type="entry name" value="Ribosomal_bL12_oligo_N_sf"/>
</dbReference>
<dbReference type="NCBIfam" id="TIGR00855">
    <property type="entry name" value="L12"/>
    <property type="match status" value="1"/>
</dbReference>
<dbReference type="PANTHER" id="PTHR45987">
    <property type="entry name" value="39S RIBOSOMAL PROTEIN L12"/>
    <property type="match status" value="1"/>
</dbReference>
<dbReference type="PANTHER" id="PTHR45987:SF4">
    <property type="entry name" value="LARGE RIBOSOMAL SUBUNIT PROTEIN BL12M"/>
    <property type="match status" value="1"/>
</dbReference>
<dbReference type="Pfam" id="PF00542">
    <property type="entry name" value="Ribosomal_L12"/>
    <property type="match status" value="1"/>
</dbReference>
<dbReference type="Pfam" id="PF16320">
    <property type="entry name" value="Ribosomal_L12_N"/>
    <property type="match status" value="1"/>
</dbReference>
<dbReference type="SUPFAM" id="SSF54736">
    <property type="entry name" value="ClpS-like"/>
    <property type="match status" value="1"/>
</dbReference>
<dbReference type="SUPFAM" id="SSF48300">
    <property type="entry name" value="Ribosomal protein L7/12, oligomerisation (N-terminal) domain"/>
    <property type="match status" value="1"/>
</dbReference>
<gene>
    <name evidence="1" type="primary">rplL</name>
    <name type="ordered locus">BbuZS7_0392</name>
</gene>
<reference key="1">
    <citation type="journal article" date="2011" name="J. Bacteriol.">
        <title>Whole-genome sequences of thirteen isolates of Borrelia burgdorferi.</title>
        <authorList>
            <person name="Schutzer S.E."/>
            <person name="Fraser-Liggett C.M."/>
            <person name="Casjens S.R."/>
            <person name="Qiu W.G."/>
            <person name="Dunn J.J."/>
            <person name="Mongodin E.F."/>
            <person name="Luft B.J."/>
        </authorList>
    </citation>
    <scope>NUCLEOTIDE SEQUENCE [LARGE SCALE GENOMIC DNA]</scope>
    <source>
        <strain>ZS7</strain>
    </source>
</reference>